<feature type="chain" id="PRO_0000088459" description="Putative zinc metalloprotease SACOL1281">
    <location>
        <begin position="1"/>
        <end position="428"/>
    </location>
</feature>
<feature type="transmembrane region" description="Helical" evidence="1">
    <location>
        <begin position="172"/>
        <end position="194"/>
    </location>
</feature>
<feature type="transmembrane region" description="Helical" evidence="1">
    <location>
        <begin position="309"/>
        <end position="331"/>
    </location>
</feature>
<feature type="transmembrane region" description="Helical" evidence="1">
    <location>
        <begin position="352"/>
        <end position="374"/>
    </location>
</feature>
<feature type="transmembrane region" description="Helical" evidence="1">
    <location>
        <begin position="401"/>
        <end position="420"/>
    </location>
</feature>
<feature type="domain" description="PDZ">
    <location>
        <begin position="186"/>
        <end position="269"/>
    </location>
</feature>
<feature type="active site" evidence="2">
    <location>
        <position position="22"/>
    </location>
</feature>
<feature type="binding site" evidence="2">
    <location>
        <position position="21"/>
    </location>
    <ligand>
        <name>Zn(2+)</name>
        <dbReference type="ChEBI" id="CHEBI:29105"/>
        <note>catalytic</note>
    </ligand>
</feature>
<feature type="binding site" evidence="2">
    <location>
        <position position="25"/>
    </location>
    <ligand>
        <name>Zn(2+)</name>
        <dbReference type="ChEBI" id="CHEBI:29105"/>
        <note>catalytic</note>
    </ligand>
</feature>
<organism>
    <name type="scientific">Staphylococcus aureus (strain COL)</name>
    <dbReference type="NCBI Taxonomy" id="93062"/>
    <lineage>
        <taxon>Bacteria</taxon>
        <taxon>Bacillati</taxon>
        <taxon>Bacillota</taxon>
        <taxon>Bacilli</taxon>
        <taxon>Bacillales</taxon>
        <taxon>Staphylococcaceae</taxon>
        <taxon>Staphylococcus</taxon>
    </lineage>
</organism>
<keyword id="KW-1003">Cell membrane</keyword>
<keyword id="KW-0378">Hydrolase</keyword>
<keyword id="KW-0472">Membrane</keyword>
<keyword id="KW-0479">Metal-binding</keyword>
<keyword id="KW-0482">Metalloprotease</keyword>
<keyword id="KW-0645">Protease</keyword>
<keyword id="KW-0812">Transmembrane</keyword>
<keyword id="KW-1133">Transmembrane helix</keyword>
<keyword id="KW-0862">Zinc</keyword>
<accession>Q5HGG9</accession>
<protein>
    <recommendedName>
        <fullName>Putative zinc metalloprotease SACOL1281</fullName>
        <ecNumber>3.4.24.-</ecNumber>
    </recommendedName>
</protein>
<proteinExistence type="inferred from homology"/>
<sequence>MSYLVTIIAFIIVFGVLVTVHEYGHMFFAKRAGIMCPEFAIGMGPKIFSFRKNETLYTIRLLPVGGYVRMAGDGLEEPPVEPGMNVKIKLNEENEITHIILDDHHKFQQIEAIEVKKCDFKDDLFIEGITAYDNERHHFKIARKSFFVENGSLVQIAPRDRQFAHKKPWPKFLTLFAGPLFNFILALVLFIGLAYYQGTPTSTVEQVADKYPAQQAGLQKGDKIVQIGKYKISEFDDVDKALDKVKDNKTTVKFERDGKTKSVELTPKKTEKKLTKVSSETKYVLGFQPASEHTLFKPIVFGFKSFLIGSTYIFTAVVGMLASIFTGGFSFDMLNGPVGIYHNVDSVVKAGIISLIGYTALLSVNLGIMNLIPIPALDGGRILFVIYEAIFRKPVNKKAETTIIAIGAIFMVVIMILVTWNDIRRYFL</sequence>
<evidence type="ECO:0000255" key="1"/>
<evidence type="ECO:0000255" key="2">
    <source>
        <dbReference type="PROSITE-ProRule" id="PRU10095"/>
    </source>
</evidence>
<evidence type="ECO:0000305" key="3"/>
<dbReference type="EC" id="3.4.24.-"/>
<dbReference type="EMBL" id="CP000046">
    <property type="protein sequence ID" value="AAW38112.1"/>
    <property type="molecule type" value="Genomic_DNA"/>
</dbReference>
<dbReference type="SMR" id="Q5HGG9"/>
<dbReference type="KEGG" id="sac:SACOL1281"/>
<dbReference type="HOGENOM" id="CLU_025778_1_0_9"/>
<dbReference type="Proteomes" id="UP000000530">
    <property type="component" value="Chromosome"/>
</dbReference>
<dbReference type="GO" id="GO:0005886">
    <property type="term" value="C:plasma membrane"/>
    <property type="evidence" value="ECO:0007669"/>
    <property type="project" value="UniProtKB-SubCell"/>
</dbReference>
<dbReference type="GO" id="GO:0046872">
    <property type="term" value="F:metal ion binding"/>
    <property type="evidence" value="ECO:0007669"/>
    <property type="project" value="UniProtKB-KW"/>
</dbReference>
<dbReference type="GO" id="GO:0004222">
    <property type="term" value="F:metalloendopeptidase activity"/>
    <property type="evidence" value="ECO:0007669"/>
    <property type="project" value="InterPro"/>
</dbReference>
<dbReference type="GO" id="GO:0006508">
    <property type="term" value="P:proteolysis"/>
    <property type="evidence" value="ECO:0007669"/>
    <property type="project" value="UniProtKB-KW"/>
</dbReference>
<dbReference type="CDD" id="cd23081">
    <property type="entry name" value="cpPDZ_EcRseP-like"/>
    <property type="match status" value="1"/>
</dbReference>
<dbReference type="CDD" id="cd06163">
    <property type="entry name" value="S2P-M50_PDZ_RseP-like"/>
    <property type="match status" value="1"/>
</dbReference>
<dbReference type="Gene3D" id="2.30.42.10">
    <property type="match status" value="1"/>
</dbReference>
<dbReference type="InterPro" id="IPR001478">
    <property type="entry name" value="PDZ"/>
</dbReference>
<dbReference type="InterPro" id="IPR036034">
    <property type="entry name" value="PDZ_sf"/>
</dbReference>
<dbReference type="InterPro" id="IPR004387">
    <property type="entry name" value="Pept_M50_Zn"/>
</dbReference>
<dbReference type="InterPro" id="IPR008915">
    <property type="entry name" value="Peptidase_M50"/>
</dbReference>
<dbReference type="NCBIfam" id="TIGR00054">
    <property type="entry name" value="RIP metalloprotease RseP"/>
    <property type="match status" value="1"/>
</dbReference>
<dbReference type="PANTHER" id="PTHR42837:SF2">
    <property type="entry name" value="MEMBRANE METALLOPROTEASE ARASP2, CHLOROPLASTIC-RELATED"/>
    <property type="match status" value="1"/>
</dbReference>
<dbReference type="PANTHER" id="PTHR42837">
    <property type="entry name" value="REGULATOR OF SIGMA-E PROTEASE RSEP"/>
    <property type="match status" value="1"/>
</dbReference>
<dbReference type="Pfam" id="PF13180">
    <property type="entry name" value="PDZ_2"/>
    <property type="match status" value="1"/>
</dbReference>
<dbReference type="Pfam" id="PF02163">
    <property type="entry name" value="Peptidase_M50"/>
    <property type="match status" value="1"/>
</dbReference>
<dbReference type="SUPFAM" id="SSF50156">
    <property type="entry name" value="PDZ domain-like"/>
    <property type="match status" value="1"/>
</dbReference>
<dbReference type="PROSITE" id="PS00142">
    <property type="entry name" value="ZINC_PROTEASE"/>
    <property type="match status" value="1"/>
</dbReference>
<comment type="cofactor">
    <cofactor evidence="3">
        <name>Zn(2+)</name>
        <dbReference type="ChEBI" id="CHEBI:29105"/>
    </cofactor>
</comment>
<comment type="subcellular location">
    <subcellularLocation>
        <location evidence="3">Cell membrane</location>
        <topology evidence="3">Multi-pass membrane protein</topology>
    </subcellularLocation>
</comment>
<comment type="similarity">
    <text evidence="3">Belongs to the peptidase M50B family.</text>
</comment>
<gene>
    <name type="ordered locus">SACOL1281</name>
</gene>
<reference key="1">
    <citation type="journal article" date="2005" name="J. Bacteriol.">
        <title>Insights on evolution of virulence and resistance from the complete genome analysis of an early methicillin-resistant Staphylococcus aureus strain and a biofilm-producing methicillin-resistant Staphylococcus epidermidis strain.</title>
        <authorList>
            <person name="Gill S.R."/>
            <person name="Fouts D.E."/>
            <person name="Archer G.L."/>
            <person name="Mongodin E.F."/>
            <person name="DeBoy R.T."/>
            <person name="Ravel J."/>
            <person name="Paulsen I.T."/>
            <person name="Kolonay J.F."/>
            <person name="Brinkac L.M."/>
            <person name="Beanan M.J."/>
            <person name="Dodson R.J."/>
            <person name="Daugherty S.C."/>
            <person name="Madupu R."/>
            <person name="Angiuoli S.V."/>
            <person name="Durkin A.S."/>
            <person name="Haft D.H."/>
            <person name="Vamathevan J.J."/>
            <person name="Khouri H."/>
            <person name="Utterback T.R."/>
            <person name="Lee C."/>
            <person name="Dimitrov G."/>
            <person name="Jiang L."/>
            <person name="Qin H."/>
            <person name="Weidman J."/>
            <person name="Tran K."/>
            <person name="Kang K.H."/>
            <person name="Hance I.R."/>
            <person name="Nelson K.E."/>
            <person name="Fraser C.M."/>
        </authorList>
    </citation>
    <scope>NUCLEOTIDE SEQUENCE [LARGE SCALE GENOMIC DNA]</scope>
    <source>
        <strain>COL</strain>
    </source>
</reference>
<name>Y1281_STAAC</name>